<gene>
    <name evidence="9" type="primary">PAQR6</name>
</gene>
<protein>
    <recommendedName>
        <fullName evidence="6">Membrane progestin receptor delta</fullName>
        <shortName evidence="6">mPR delta</shortName>
    </recommendedName>
    <alternativeName>
        <fullName evidence="6">Membrane progesterone P4 receptor delta</fullName>
    </alternativeName>
    <alternativeName>
        <fullName evidence="6">Membrane progesterone receptor delta</fullName>
    </alternativeName>
    <alternativeName>
        <fullName>Progesterone and adipoQ receptor family member 6</fullName>
    </alternativeName>
    <alternativeName>
        <fullName evidence="5">Progestin and adipoQ receptor family member 6</fullName>
    </alternativeName>
</protein>
<dbReference type="EMBL" id="AF455045">
    <property type="protein sequence ID" value="AAP97701.1"/>
    <property type="status" value="ALT_FRAME"/>
    <property type="molecule type" value="mRNA"/>
</dbReference>
<dbReference type="EMBL" id="AF455047">
    <property type="protein sequence ID" value="AAP97703.1"/>
    <property type="status" value="ALT_FRAME"/>
    <property type="molecule type" value="mRNA"/>
</dbReference>
<dbReference type="EMBL" id="AY424284">
    <property type="protein sequence ID" value="AAR08372.1"/>
    <property type="molecule type" value="mRNA"/>
</dbReference>
<dbReference type="EMBL" id="AK026325">
    <property type="protein sequence ID" value="BAB15446.1"/>
    <property type="status" value="ALT_INIT"/>
    <property type="molecule type" value="mRNA"/>
</dbReference>
<dbReference type="EMBL" id="AK095143">
    <property type="protein sequence ID" value="BAC04493.1"/>
    <property type="molecule type" value="mRNA"/>
</dbReference>
<dbReference type="EMBL" id="AK095197">
    <property type="protein sequence ID" value="BAC04497.1"/>
    <property type="molecule type" value="mRNA"/>
</dbReference>
<dbReference type="EMBL" id="AK316034">
    <property type="protein sequence ID" value="BAH14405.1"/>
    <property type="molecule type" value="mRNA"/>
</dbReference>
<dbReference type="EMBL" id="AL834227">
    <property type="protein sequence ID" value="CAD38905.2"/>
    <property type="molecule type" value="Transcribed_RNA"/>
</dbReference>
<dbReference type="EMBL" id="AL135927">
    <property type="status" value="NOT_ANNOTATED_CDS"/>
    <property type="molecule type" value="Genomic_DNA"/>
</dbReference>
<dbReference type="EMBL" id="CH471121">
    <property type="protein sequence ID" value="EAW52976.1"/>
    <property type="molecule type" value="Genomic_DNA"/>
</dbReference>
<dbReference type="EMBL" id="CH471121">
    <property type="protein sequence ID" value="EAW52977.1"/>
    <property type="molecule type" value="Genomic_DNA"/>
</dbReference>
<dbReference type="EMBL" id="CH471121">
    <property type="protein sequence ID" value="EAW52979.1"/>
    <property type="molecule type" value="Genomic_DNA"/>
</dbReference>
<dbReference type="EMBL" id="CH471121">
    <property type="protein sequence ID" value="EAW52982.1"/>
    <property type="molecule type" value="Genomic_DNA"/>
</dbReference>
<dbReference type="EMBL" id="CH471121">
    <property type="protein sequence ID" value="EAW52983.1"/>
    <property type="molecule type" value="Genomic_DNA"/>
</dbReference>
<dbReference type="EMBL" id="BC058509">
    <property type="protein sequence ID" value="AAH58509.1"/>
    <property type="molecule type" value="mRNA"/>
</dbReference>
<dbReference type="CCDS" id="CCDS1135.1">
    <molecule id="Q6TCH4-2"/>
</dbReference>
<dbReference type="CCDS" id="CCDS1136.1">
    <molecule id="Q6TCH4-1"/>
</dbReference>
<dbReference type="CCDS" id="CCDS60301.1">
    <molecule id="Q6TCH4-5"/>
</dbReference>
<dbReference type="RefSeq" id="NP_001259033.1">
    <molecule id="Q6TCH4-1"/>
    <property type="nucleotide sequence ID" value="NM_001272104.2"/>
</dbReference>
<dbReference type="RefSeq" id="NP_001259034.1">
    <molecule id="Q6TCH4-5"/>
    <property type="nucleotide sequence ID" value="NM_001272105.2"/>
</dbReference>
<dbReference type="RefSeq" id="NP_001259036.1">
    <molecule id="Q6TCH4-3"/>
    <property type="nucleotide sequence ID" value="NM_001272107.2"/>
</dbReference>
<dbReference type="RefSeq" id="NP_001259037.1">
    <property type="nucleotide sequence ID" value="NM_001272108.1"/>
</dbReference>
<dbReference type="RefSeq" id="NP_001259038.1">
    <property type="nucleotide sequence ID" value="NM_001272109.1"/>
</dbReference>
<dbReference type="RefSeq" id="NP_001259039.1">
    <property type="nucleotide sequence ID" value="NM_001272110.1"/>
</dbReference>
<dbReference type="RefSeq" id="NP_001259040.1">
    <property type="nucleotide sequence ID" value="NM_001272111.1"/>
</dbReference>
<dbReference type="RefSeq" id="NP_001259041.1">
    <property type="nucleotide sequence ID" value="NM_001272112.1"/>
</dbReference>
<dbReference type="RefSeq" id="NP_001259042.1">
    <property type="nucleotide sequence ID" value="NM_001272113.1"/>
</dbReference>
<dbReference type="RefSeq" id="NP_079173.2">
    <molecule id="Q6TCH4-2"/>
    <property type="nucleotide sequence ID" value="NM_024897.3"/>
</dbReference>
<dbReference type="RefSeq" id="NP_940798.1">
    <molecule id="Q6TCH4-1"/>
    <property type="nucleotide sequence ID" value="NM_198406.3"/>
</dbReference>
<dbReference type="SMR" id="Q6TCH4"/>
<dbReference type="BioGRID" id="123026">
    <property type="interactions" value="8"/>
</dbReference>
<dbReference type="FunCoup" id="Q6TCH4">
    <property type="interactions" value="378"/>
</dbReference>
<dbReference type="IntAct" id="Q6TCH4">
    <property type="interactions" value="6"/>
</dbReference>
<dbReference type="MINT" id="Q6TCH4"/>
<dbReference type="STRING" id="9606.ENSP00000338330"/>
<dbReference type="iPTMnet" id="Q6TCH4"/>
<dbReference type="PhosphoSitePlus" id="Q6TCH4"/>
<dbReference type="BioMuta" id="PAQR6"/>
<dbReference type="DMDM" id="51701773"/>
<dbReference type="PaxDb" id="9606-ENSP00000338330"/>
<dbReference type="PeptideAtlas" id="Q6TCH4"/>
<dbReference type="Antibodypedia" id="2553">
    <property type="antibodies" value="98 antibodies from 16 providers"/>
</dbReference>
<dbReference type="DNASU" id="79957"/>
<dbReference type="Ensembl" id="ENST00000292291.10">
    <molecule id="Q6TCH4-1"/>
    <property type="protein sequence ID" value="ENSP00000292291.5"/>
    <property type="gene ID" value="ENSG00000160781.17"/>
</dbReference>
<dbReference type="Ensembl" id="ENST00000335852.6">
    <molecule id="Q6TCH4-2"/>
    <property type="protein sequence ID" value="ENSP00000338330.1"/>
    <property type="gene ID" value="ENSG00000160781.17"/>
</dbReference>
<dbReference type="Ensembl" id="ENST00000356983.7">
    <molecule id="Q6TCH4-5"/>
    <property type="protein sequence ID" value="ENSP00000349474.3"/>
    <property type="gene ID" value="ENSG00000160781.17"/>
</dbReference>
<dbReference type="Ensembl" id="ENST00000368270.2">
    <molecule id="Q6TCH4-4"/>
    <property type="protein sequence ID" value="ENSP00000357253.1"/>
    <property type="gene ID" value="ENSG00000160781.17"/>
</dbReference>
<dbReference type="GeneID" id="79957"/>
<dbReference type="KEGG" id="hsa:79957"/>
<dbReference type="MANE-Select" id="ENST00000292291.10">
    <property type="protein sequence ID" value="ENSP00000292291.5"/>
    <property type="RefSeq nucleotide sequence ID" value="NM_198406.3"/>
    <property type="RefSeq protein sequence ID" value="NP_940798.1"/>
</dbReference>
<dbReference type="UCSC" id="uc001fnu.3">
    <molecule id="Q6TCH4-1"/>
    <property type="organism name" value="human"/>
</dbReference>
<dbReference type="AGR" id="HGNC:30132"/>
<dbReference type="CTD" id="79957"/>
<dbReference type="DisGeNET" id="79957"/>
<dbReference type="GeneCards" id="PAQR6"/>
<dbReference type="HGNC" id="HGNC:30132">
    <property type="gene designation" value="PAQR6"/>
</dbReference>
<dbReference type="HPA" id="ENSG00000160781">
    <property type="expression patterns" value="Tissue enriched (brain)"/>
</dbReference>
<dbReference type="MalaCards" id="PAQR6"/>
<dbReference type="MIM" id="614579">
    <property type="type" value="gene"/>
</dbReference>
<dbReference type="neXtProt" id="NX_Q6TCH4"/>
<dbReference type="OpenTargets" id="ENSG00000160781"/>
<dbReference type="PharmGKB" id="PA134931897"/>
<dbReference type="VEuPathDB" id="HostDB:ENSG00000160781"/>
<dbReference type="eggNOG" id="KOG0748">
    <property type="taxonomic scope" value="Eukaryota"/>
</dbReference>
<dbReference type="GeneTree" id="ENSGT00940000160567"/>
<dbReference type="HOGENOM" id="CLU_052356_1_0_1"/>
<dbReference type="InParanoid" id="Q6TCH4"/>
<dbReference type="OMA" id="TSCCAHT"/>
<dbReference type="OrthoDB" id="529367at2759"/>
<dbReference type="PAN-GO" id="Q6TCH4">
    <property type="GO annotations" value="1 GO annotation based on evolutionary models"/>
</dbReference>
<dbReference type="PhylomeDB" id="Q6TCH4"/>
<dbReference type="TreeFam" id="TF319738"/>
<dbReference type="PathwayCommons" id="Q6TCH4"/>
<dbReference type="SignaLink" id="Q6TCH4"/>
<dbReference type="BioGRID-ORCS" id="79957">
    <property type="hits" value="34 hits in 1153 CRISPR screens"/>
</dbReference>
<dbReference type="ChiTaRS" id="PAQR6">
    <property type="organism name" value="human"/>
</dbReference>
<dbReference type="GenomeRNAi" id="79957"/>
<dbReference type="Pharos" id="Q6TCH4">
    <property type="development level" value="Tbio"/>
</dbReference>
<dbReference type="PRO" id="PR:Q6TCH4"/>
<dbReference type="Proteomes" id="UP000005640">
    <property type="component" value="Chromosome 1"/>
</dbReference>
<dbReference type="RNAct" id="Q6TCH4">
    <property type="molecule type" value="protein"/>
</dbReference>
<dbReference type="Bgee" id="ENSG00000160781">
    <property type="expression patterns" value="Expressed in C1 segment of cervical spinal cord and 131 other cell types or tissues"/>
</dbReference>
<dbReference type="ExpressionAtlas" id="Q6TCH4">
    <property type="expression patterns" value="baseline and differential"/>
</dbReference>
<dbReference type="GO" id="GO:0005886">
    <property type="term" value="C:plasma membrane"/>
    <property type="evidence" value="ECO:0007669"/>
    <property type="project" value="UniProtKB-SubCell"/>
</dbReference>
<dbReference type="GO" id="GO:0038023">
    <property type="term" value="F:signaling receptor activity"/>
    <property type="evidence" value="ECO:0000318"/>
    <property type="project" value="GO_Central"/>
</dbReference>
<dbReference type="GO" id="GO:0005496">
    <property type="term" value="F:steroid binding"/>
    <property type="evidence" value="ECO:0007669"/>
    <property type="project" value="UniProtKB-KW"/>
</dbReference>
<dbReference type="InterPro" id="IPR004254">
    <property type="entry name" value="AdipoR/HlyIII-related"/>
</dbReference>
<dbReference type="PANTHER" id="PTHR20855">
    <property type="entry name" value="ADIPOR/PROGESTIN RECEPTOR-RELATED"/>
    <property type="match status" value="1"/>
</dbReference>
<dbReference type="PANTHER" id="PTHR20855:SF39">
    <property type="entry name" value="MEMBRANE PROGESTIN RECEPTOR DELTA"/>
    <property type="match status" value="1"/>
</dbReference>
<dbReference type="Pfam" id="PF03006">
    <property type="entry name" value="HlyIII"/>
    <property type="match status" value="1"/>
</dbReference>
<accession>Q6TCH4</accession>
<accession>B7Z9R9</accession>
<accession>D3DVB4</accession>
<accession>D3DVB6</accession>
<accession>Q5TCK9</accession>
<accession>Q6PDU0</accession>
<accession>Q7Z4Q7</accession>
<accession>Q7Z4Q9</accession>
<accession>Q8N121</accession>
<accession>Q8N3M2</accession>
<accession>Q9H621</accession>
<proteinExistence type="evidence at protein level"/>
<keyword id="KW-0025">Alternative splicing</keyword>
<keyword id="KW-1003">Cell membrane</keyword>
<keyword id="KW-0446">Lipid-binding</keyword>
<keyword id="KW-0472">Membrane</keyword>
<keyword id="KW-1267">Proteomics identification</keyword>
<keyword id="KW-0675">Receptor</keyword>
<keyword id="KW-1185">Reference proteome</keyword>
<keyword id="KW-0754">Steroid-binding</keyword>
<keyword id="KW-0812">Transmembrane</keyword>
<keyword id="KW-1133">Transmembrane helix</keyword>
<comment type="function">
    <text evidence="3 6">Plasma membrane progesterone (P4) receptor coupled to G proteins (PubMed:23161870, PubMed:23763432). Seems to act through a G(s) mediated pathway (PubMed:23161870). Involved in neurosteroid inhibition of apoptosis (PubMed:23161870). May be involved in regulating rapid P4 signaling in the nervous system (PubMed:23763432). Also binds dehydroepiandrosterone (DHEA), pregnanolone, pregnenolone and allopregnanolone (PubMed:23161870, PubMed:23763432).</text>
</comment>
<comment type="subunit">
    <text evidence="3">Homodimer.</text>
</comment>
<comment type="interaction">
    <interactant intactId="EBI-17265310">
        <id>Q6TCH4</id>
    </interactant>
    <interactant intactId="EBI-6942903">
        <id>Q96BA8</id>
        <label>CREB3L1</label>
    </interactant>
    <organismsDiffer>false</organismsDiffer>
    <experiments>3</experiments>
</comment>
<comment type="interaction">
    <interactant intactId="EBI-17265310">
        <id>Q6TCH4</id>
    </interactant>
    <interactant intactId="EBI-11721746">
        <id>Q8TED1</id>
        <label>GPX8</label>
    </interactant>
    <organismsDiffer>false</organismsDiffer>
    <experiments>3</experiments>
</comment>
<comment type="interaction">
    <interactant intactId="EBI-17265310">
        <id>Q6TCH4</id>
    </interactant>
    <interactant intactId="EBI-17263240">
        <id>P15941-11</id>
        <label>MUC1</label>
    </interactant>
    <organismsDiffer>false</organismsDiffer>
    <experiments>3</experiments>
</comment>
<comment type="interaction">
    <interactant intactId="EBI-17265310">
        <id>Q6TCH4</id>
    </interactant>
    <interactant intactId="EBI-2340657">
        <id>P50876</id>
        <label>RNF144A</label>
    </interactant>
    <organismsDiffer>false</organismsDiffer>
    <experiments>3</experiments>
</comment>
<comment type="subcellular location">
    <subcellularLocation>
        <location evidence="3">Cell membrane</location>
        <topology evidence="1">Multi-pass membrane protein</topology>
    </subcellularLocation>
</comment>
<comment type="alternative products">
    <event type="alternative splicing"/>
    <isoform>
        <id>Q6TCH4-1</id>
        <name>1</name>
        <sequence type="displayed"/>
    </isoform>
    <isoform>
        <id>Q6TCH4-2</id>
        <name>2</name>
        <sequence type="described" ref="VSP_011484 VSP_011485"/>
    </isoform>
    <isoform>
        <id>Q6TCH4-3</id>
        <name>3</name>
        <sequence type="described" ref="VSP_011484"/>
    </isoform>
    <isoform>
        <id>Q6TCH4-4</id>
        <name>4</name>
        <sequence type="described" ref="VSP_011483"/>
    </isoform>
    <isoform>
        <id>Q6TCH4-5</id>
        <name>5</name>
        <sequence type="described" ref="VSP_054538"/>
    </isoform>
</comment>
<comment type="tissue specificity">
    <text evidence="2 3 6">Brain specific (PubMed:16044242, PubMed:23763432). Highly expressed in the hypothalamus, also expressed in forebrain, amygdala, corpus callosum and spinal cord (PubMed:23161870).</text>
</comment>
<comment type="miscellaneous">
    <text evidence="6">Non-classical progesterone receptors involved in extranuclear signaling are classified in 2 groups: the class II progestin and adipoQ receptor (PAQR) family (also called mPRs) (PAQR5, PAQR6, PAQR7, PAQR8 and PAQR9) and the b5-like heme/steroid-binding protein family (also called MAPRs) (PGRMC1, PGRMC2, NENF and CYB5D2).</text>
</comment>
<comment type="similarity">
    <text evidence="8">Belongs to the ADIPOR family.</text>
</comment>
<comment type="sequence caution" evidence="8">
    <conflict type="frameshift">
        <sequence resource="EMBL-CDS" id="AAP97701"/>
    </conflict>
</comment>
<comment type="sequence caution" evidence="8">
    <conflict type="frameshift">
        <sequence resource="EMBL-CDS" id="AAP97703"/>
    </conflict>
</comment>
<comment type="sequence caution" evidence="8">
    <conflict type="erroneous initiation">
        <sequence resource="EMBL-CDS" id="BAB15446"/>
    </conflict>
</comment>
<feature type="chain" id="PRO_0000218850" description="Membrane progestin receptor delta">
    <location>
        <begin position="1"/>
        <end position="344"/>
    </location>
</feature>
<feature type="topological domain" description="Cytoplasmic" evidence="1">
    <location>
        <begin position="1"/>
        <end position="51"/>
    </location>
</feature>
<feature type="transmembrane region" description="Helical" evidence="1">
    <location>
        <begin position="52"/>
        <end position="72"/>
    </location>
</feature>
<feature type="topological domain" description="Extracellular" evidence="1">
    <location>
        <begin position="73"/>
        <end position="83"/>
    </location>
</feature>
<feature type="transmembrane region" description="Helical" evidence="1">
    <location>
        <begin position="84"/>
        <end position="104"/>
    </location>
</feature>
<feature type="topological domain" description="Cytoplasmic" evidence="1">
    <location>
        <begin position="105"/>
        <end position="113"/>
    </location>
</feature>
<feature type="transmembrane region" description="Helical" evidence="1">
    <location>
        <begin position="114"/>
        <end position="134"/>
    </location>
</feature>
<feature type="topological domain" description="Extracellular" evidence="1">
    <location>
        <begin position="135"/>
        <end position="147"/>
    </location>
</feature>
<feature type="transmembrane region" description="Helical" evidence="1">
    <location>
        <begin position="148"/>
        <end position="168"/>
    </location>
</feature>
<feature type="topological domain" description="Cytoplasmic" evidence="1">
    <location>
        <begin position="169"/>
        <end position="217"/>
    </location>
</feature>
<feature type="transmembrane region" description="Helical" evidence="1">
    <location>
        <begin position="218"/>
        <end position="238"/>
    </location>
</feature>
<feature type="topological domain" description="Extracellular" evidence="1">
    <location>
        <begin position="239"/>
        <end position="258"/>
    </location>
</feature>
<feature type="transmembrane region" description="Helical" evidence="1">
    <location>
        <begin position="259"/>
        <end position="279"/>
    </location>
</feature>
<feature type="topological domain" description="Cytoplasmic" evidence="1">
    <location>
        <begin position="280"/>
        <end position="292"/>
    </location>
</feature>
<feature type="transmembrane region" description="Helical" evidence="1">
    <location>
        <begin position="293"/>
        <end position="313"/>
    </location>
</feature>
<feature type="topological domain" description="Extracellular" evidence="1">
    <location>
        <begin position="314"/>
        <end position="344"/>
    </location>
</feature>
<feature type="splice variant" id="VSP_011484" description="In isoform 2 and isoform 3." evidence="4 7">
    <location>
        <begin position="1"/>
        <end position="106"/>
    </location>
</feature>
<feature type="splice variant" id="VSP_011483" description="In isoform 4." evidence="7">
    <location>
        <begin position="1"/>
        <end position="24"/>
    </location>
</feature>
<feature type="splice variant" id="VSP_054538" description="In isoform 5." evidence="4">
    <location>
        <begin position="15"/>
        <end position="17"/>
    </location>
</feature>
<feature type="splice variant" id="VSP_011485" description="In isoform 2." evidence="4">
    <original>HSHQLFHICAVLGTHFQLEAVLADMGSRRAWLATQEPALGLAGTVATLVLAAAGNLLIIAAFTATLLRAPSTCPLLQGGPLEGGTQAKQQ</original>
    <variation>EGTPGPAREEAGADAFPEHRMNWATATSYSTSVQCWAPTSSWRQCWLIWDHAEPGWPHRNLPWAWQAQWPHWSWLQLGTYSLLLLSQPPCFGPPVHALCCRVAHWRGVPRPNNSEAPSLTLSWRGQRPGPSADEEPRFGPNQVGTHLSLEPTGAEERGHRREGREEEGCLGGLAECERDREGALDGSGRSAEGLRGEMHACPG</variation>
    <location>
        <begin position="255"/>
        <end position="344"/>
    </location>
</feature>
<feature type="sequence conflict" description="In Ref. 2; AAR08372." evidence="8" ref="2">
    <original>L</original>
    <variation>P</variation>
    <location>
        <position position="166"/>
    </location>
</feature>
<feature type="sequence conflict" description="In Ref. 4; CAD38905." evidence="8" ref="4">
    <original>G</original>
    <variation>V</variation>
    <location>
        <position position="224"/>
    </location>
</feature>
<feature type="sequence conflict" description="In Ref. 1; AAP97703." evidence="8" ref="1">
    <original>HLP</original>
    <variation>QTD</variation>
    <location>
        <begin position="240"/>
        <end position="242"/>
    </location>
</feature>
<feature type="sequence conflict" description="In Ref. 3; BAC04493." evidence="8" ref="3">
    <original>R</original>
    <variation>G</variation>
    <location>
        <position position="244"/>
    </location>
</feature>
<feature type="sequence variant" id="VAR_082793" description="In dbSNP:rs7513351." evidence="8">
    <original>E</original>
    <variation>K</variation>
    <location sequence="Q6TCH4-2">
        <position position="263"/>
    </location>
</feature>
<reference key="1">
    <citation type="submission" date="2001-12" db="EMBL/GenBank/DDBJ databases">
        <authorList>
            <person name="Zan Q."/>
            <person name="Guo J.H."/>
            <person name="Yu L."/>
        </authorList>
    </citation>
    <scope>NUCLEOTIDE SEQUENCE [LARGE SCALE MRNA] (ISOFORMS 3 AND 4)</scope>
    <source>
        <tissue>Brain</tissue>
    </source>
</reference>
<reference key="2">
    <citation type="journal article" date="2005" name="J. Mol. Evol.">
        <title>PAQR proteins: a novel membrane receptor family defined by an ancient 7-transmembrane pass motif.</title>
        <authorList>
            <person name="Tang Y.T."/>
            <person name="Hu T."/>
            <person name="Arterburn M."/>
            <person name="Boyle B."/>
            <person name="Bright J.M."/>
            <person name="Emtage P.C."/>
            <person name="Funk W.D."/>
        </authorList>
    </citation>
    <scope>NUCLEOTIDE SEQUENCE [MRNA] (ISOFORM 1)</scope>
    <scope>TISSUE SPECIFICITY</scope>
</reference>
<reference key="3">
    <citation type="journal article" date="2004" name="Nat. Genet.">
        <title>Complete sequencing and characterization of 21,243 full-length human cDNAs.</title>
        <authorList>
            <person name="Ota T."/>
            <person name="Suzuki Y."/>
            <person name="Nishikawa T."/>
            <person name="Otsuki T."/>
            <person name="Sugiyama T."/>
            <person name="Irie R."/>
            <person name="Wakamatsu A."/>
            <person name="Hayashi K."/>
            <person name="Sato H."/>
            <person name="Nagai K."/>
            <person name="Kimura K."/>
            <person name="Makita H."/>
            <person name="Sekine M."/>
            <person name="Obayashi M."/>
            <person name="Nishi T."/>
            <person name="Shibahara T."/>
            <person name="Tanaka T."/>
            <person name="Ishii S."/>
            <person name="Yamamoto J."/>
            <person name="Saito K."/>
            <person name="Kawai Y."/>
            <person name="Isono Y."/>
            <person name="Nakamura Y."/>
            <person name="Nagahari K."/>
            <person name="Murakami K."/>
            <person name="Yasuda T."/>
            <person name="Iwayanagi T."/>
            <person name="Wagatsuma M."/>
            <person name="Shiratori A."/>
            <person name="Sudo H."/>
            <person name="Hosoiri T."/>
            <person name="Kaku Y."/>
            <person name="Kodaira H."/>
            <person name="Kondo H."/>
            <person name="Sugawara M."/>
            <person name="Takahashi M."/>
            <person name="Kanda K."/>
            <person name="Yokoi T."/>
            <person name="Furuya T."/>
            <person name="Kikkawa E."/>
            <person name="Omura Y."/>
            <person name="Abe K."/>
            <person name="Kamihara K."/>
            <person name="Katsuta N."/>
            <person name="Sato K."/>
            <person name="Tanikawa M."/>
            <person name="Yamazaki M."/>
            <person name="Ninomiya K."/>
            <person name="Ishibashi T."/>
            <person name="Yamashita H."/>
            <person name="Murakawa K."/>
            <person name="Fujimori K."/>
            <person name="Tanai H."/>
            <person name="Kimata M."/>
            <person name="Watanabe M."/>
            <person name="Hiraoka S."/>
            <person name="Chiba Y."/>
            <person name="Ishida S."/>
            <person name="Ono Y."/>
            <person name="Takiguchi S."/>
            <person name="Watanabe S."/>
            <person name="Yosida M."/>
            <person name="Hotuta T."/>
            <person name="Kusano J."/>
            <person name="Kanehori K."/>
            <person name="Takahashi-Fujii A."/>
            <person name="Hara H."/>
            <person name="Tanase T.-O."/>
            <person name="Nomura Y."/>
            <person name="Togiya S."/>
            <person name="Komai F."/>
            <person name="Hara R."/>
            <person name="Takeuchi K."/>
            <person name="Arita M."/>
            <person name="Imose N."/>
            <person name="Musashino K."/>
            <person name="Yuuki H."/>
            <person name="Oshima A."/>
            <person name="Sasaki N."/>
            <person name="Aotsuka S."/>
            <person name="Yoshikawa Y."/>
            <person name="Matsunawa H."/>
            <person name="Ichihara T."/>
            <person name="Shiohata N."/>
            <person name="Sano S."/>
            <person name="Moriya S."/>
            <person name="Momiyama H."/>
            <person name="Satoh N."/>
            <person name="Takami S."/>
            <person name="Terashima Y."/>
            <person name="Suzuki O."/>
            <person name="Nakagawa S."/>
            <person name="Senoh A."/>
            <person name="Mizoguchi H."/>
            <person name="Goto Y."/>
            <person name="Shimizu F."/>
            <person name="Wakebe H."/>
            <person name="Hishigaki H."/>
            <person name="Watanabe T."/>
            <person name="Sugiyama A."/>
            <person name="Takemoto M."/>
            <person name="Kawakami B."/>
            <person name="Yamazaki M."/>
            <person name="Watanabe K."/>
            <person name="Kumagai A."/>
            <person name="Itakura S."/>
            <person name="Fukuzumi Y."/>
            <person name="Fujimori Y."/>
            <person name="Komiyama M."/>
            <person name="Tashiro H."/>
            <person name="Tanigami A."/>
            <person name="Fujiwara T."/>
            <person name="Ono T."/>
            <person name="Yamada K."/>
            <person name="Fujii Y."/>
            <person name="Ozaki K."/>
            <person name="Hirao M."/>
            <person name="Ohmori Y."/>
            <person name="Kawabata A."/>
            <person name="Hikiji T."/>
            <person name="Kobatake N."/>
            <person name="Inagaki H."/>
            <person name="Ikema Y."/>
            <person name="Okamoto S."/>
            <person name="Okitani R."/>
            <person name="Kawakami T."/>
            <person name="Noguchi S."/>
            <person name="Itoh T."/>
            <person name="Shigeta K."/>
            <person name="Senba T."/>
            <person name="Matsumura K."/>
            <person name="Nakajima Y."/>
            <person name="Mizuno T."/>
            <person name="Morinaga M."/>
            <person name="Sasaki M."/>
            <person name="Togashi T."/>
            <person name="Oyama M."/>
            <person name="Hata H."/>
            <person name="Watanabe M."/>
            <person name="Komatsu T."/>
            <person name="Mizushima-Sugano J."/>
            <person name="Satoh T."/>
            <person name="Shirai Y."/>
            <person name="Takahashi Y."/>
            <person name="Nakagawa K."/>
            <person name="Okumura K."/>
            <person name="Nagase T."/>
            <person name="Nomura N."/>
            <person name="Kikuchi H."/>
            <person name="Masuho Y."/>
            <person name="Yamashita R."/>
            <person name="Nakai K."/>
            <person name="Yada T."/>
            <person name="Nakamura Y."/>
            <person name="Ohara O."/>
            <person name="Isogai T."/>
            <person name="Sugano S."/>
        </authorList>
    </citation>
    <scope>NUCLEOTIDE SEQUENCE [LARGE SCALE MRNA] (ISOFORMS 2 AND 5)</scope>
    <scope>NUCLEOTIDE SEQUENCE [LARGE SCALE MRNA] OF 126-344 (ISOFORMS 1/3/4)</scope>
    <source>
        <tissue>Caudate nucleus</tissue>
        <tissue>Small intestine</tissue>
        <tissue>Subcommissural organ</tissue>
        <tissue>Substantia nigra</tissue>
    </source>
</reference>
<reference key="4">
    <citation type="journal article" date="2007" name="BMC Genomics">
        <title>The full-ORF clone resource of the German cDNA consortium.</title>
        <authorList>
            <person name="Bechtel S."/>
            <person name="Rosenfelder H."/>
            <person name="Duda A."/>
            <person name="Schmidt C.P."/>
            <person name="Ernst U."/>
            <person name="Wellenreuther R."/>
            <person name="Mehrle A."/>
            <person name="Schuster C."/>
            <person name="Bahr A."/>
            <person name="Bloecker H."/>
            <person name="Heubner D."/>
            <person name="Hoerlein A."/>
            <person name="Michel G."/>
            <person name="Wedler H."/>
            <person name="Koehrer K."/>
            <person name="Ottenwaelder B."/>
            <person name="Poustka A."/>
            <person name="Wiemann S."/>
            <person name="Schupp I."/>
        </authorList>
    </citation>
    <scope>NUCLEOTIDE SEQUENCE [LARGE SCALE MRNA] (ISOFORM 1)</scope>
    <source>
        <tissue>Amygdala</tissue>
    </source>
</reference>
<reference key="5">
    <citation type="journal article" date="2006" name="Nature">
        <title>The DNA sequence and biological annotation of human chromosome 1.</title>
        <authorList>
            <person name="Gregory S.G."/>
            <person name="Barlow K.F."/>
            <person name="McLay K.E."/>
            <person name="Kaul R."/>
            <person name="Swarbreck D."/>
            <person name="Dunham A."/>
            <person name="Scott C.E."/>
            <person name="Howe K.L."/>
            <person name="Woodfine K."/>
            <person name="Spencer C.C.A."/>
            <person name="Jones M.C."/>
            <person name="Gillson C."/>
            <person name="Searle S."/>
            <person name="Zhou Y."/>
            <person name="Kokocinski F."/>
            <person name="McDonald L."/>
            <person name="Evans R."/>
            <person name="Phillips K."/>
            <person name="Atkinson A."/>
            <person name="Cooper R."/>
            <person name="Jones C."/>
            <person name="Hall R.E."/>
            <person name="Andrews T.D."/>
            <person name="Lloyd C."/>
            <person name="Ainscough R."/>
            <person name="Almeida J.P."/>
            <person name="Ambrose K.D."/>
            <person name="Anderson F."/>
            <person name="Andrew R.W."/>
            <person name="Ashwell R.I.S."/>
            <person name="Aubin K."/>
            <person name="Babbage A.K."/>
            <person name="Bagguley C.L."/>
            <person name="Bailey J."/>
            <person name="Beasley H."/>
            <person name="Bethel G."/>
            <person name="Bird C.P."/>
            <person name="Bray-Allen S."/>
            <person name="Brown J.Y."/>
            <person name="Brown A.J."/>
            <person name="Buckley D."/>
            <person name="Burton J."/>
            <person name="Bye J."/>
            <person name="Carder C."/>
            <person name="Chapman J.C."/>
            <person name="Clark S.Y."/>
            <person name="Clarke G."/>
            <person name="Clee C."/>
            <person name="Cobley V."/>
            <person name="Collier R.E."/>
            <person name="Corby N."/>
            <person name="Coville G.J."/>
            <person name="Davies J."/>
            <person name="Deadman R."/>
            <person name="Dunn M."/>
            <person name="Earthrowl M."/>
            <person name="Ellington A.G."/>
            <person name="Errington H."/>
            <person name="Frankish A."/>
            <person name="Frankland J."/>
            <person name="French L."/>
            <person name="Garner P."/>
            <person name="Garnett J."/>
            <person name="Gay L."/>
            <person name="Ghori M.R.J."/>
            <person name="Gibson R."/>
            <person name="Gilby L.M."/>
            <person name="Gillett W."/>
            <person name="Glithero R.J."/>
            <person name="Grafham D.V."/>
            <person name="Griffiths C."/>
            <person name="Griffiths-Jones S."/>
            <person name="Grocock R."/>
            <person name="Hammond S."/>
            <person name="Harrison E.S.I."/>
            <person name="Hart E."/>
            <person name="Haugen E."/>
            <person name="Heath P.D."/>
            <person name="Holmes S."/>
            <person name="Holt K."/>
            <person name="Howden P.J."/>
            <person name="Hunt A.R."/>
            <person name="Hunt S.E."/>
            <person name="Hunter G."/>
            <person name="Isherwood J."/>
            <person name="James R."/>
            <person name="Johnson C."/>
            <person name="Johnson D."/>
            <person name="Joy A."/>
            <person name="Kay M."/>
            <person name="Kershaw J.K."/>
            <person name="Kibukawa M."/>
            <person name="Kimberley A.M."/>
            <person name="King A."/>
            <person name="Knights A.J."/>
            <person name="Lad H."/>
            <person name="Laird G."/>
            <person name="Lawlor S."/>
            <person name="Leongamornlert D.A."/>
            <person name="Lloyd D.M."/>
            <person name="Loveland J."/>
            <person name="Lovell J."/>
            <person name="Lush M.J."/>
            <person name="Lyne R."/>
            <person name="Martin S."/>
            <person name="Mashreghi-Mohammadi M."/>
            <person name="Matthews L."/>
            <person name="Matthews N.S.W."/>
            <person name="McLaren S."/>
            <person name="Milne S."/>
            <person name="Mistry S."/>
            <person name="Moore M.J.F."/>
            <person name="Nickerson T."/>
            <person name="O'Dell C.N."/>
            <person name="Oliver K."/>
            <person name="Palmeiri A."/>
            <person name="Palmer S.A."/>
            <person name="Parker A."/>
            <person name="Patel D."/>
            <person name="Pearce A.V."/>
            <person name="Peck A.I."/>
            <person name="Pelan S."/>
            <person name="Phelps K."/>
            <person name="Phillimore B.J."/>
            <person name="Plumb R."/>
            <person name="Rajan J."/>
            <person name="Raymond C."/>
            <person name="Rouse G."/>
            <person name="Saenphimmachak C."/>
            <person name="Sehra H.K."/>
            <person name="Sheridan E."/>
            <person name="Shownkeen R."/>
            <person name="Sims S."/>
            <person name="Skuce C.D."/>
            <person name="Smith M."/>
            <person name="Steward C."/>
            <person name="Subramanian S."/>
            <person name="Sycamore N."/>
            <person name="Tracey A."/>
            <person name="Tromans A."/>
            <person name="Van Helmond Z."/>
            <person name="Wall M."/>
            <person name="Wallis J.M."/>
            <person name="White S."/>
            <person name="Whitehead S.L."/>
            <person name="Wilkinson J.E."/>
            <person name="Willey D.L."/>
            <person name="Williams H."/>
            <person name="Wilming L."/>
            <person name="Wray P.W."/>
            <person name="Wu Z."/>
            <person name="Coulson A."/>
            <person name="Vaudin M."/>
            <person name="Sulston J.E."/>
            <person name="Durbin R.M."/>
            <person name="Hubbard T."/>
            <person name="Wooster R."/>
            <person name="Dunham I."/>
            <person name="Carter N.P."/>
            <person name="McVean G."/>
            <person name="Ross M.T."/>
            <person name="Harrow J."/>
            <person name="Olson M.V."/>
            <person name="Beck S."/>
            <person name="Rogers J."/>
            <person name="Bentley D.R."/>
        </authorList>
    </citation>
    <scope>NUCLEOTIDE SEQUENCE [LARGE SCALE GENOMIC DNA]</scope>
</reference>
<reference key="6">
    <citation type="submission" date="2005-09" db="EMBL/GenBank/DDBJ databases">
        <authorList>
            <person name="Mural R.J."/>
            <person name="Istrail S."/>
            <person name="Sutton G.G."/>
            <person name="Florea L."/>
            <person name="Halpern A.L."/>
            <person name="Mobarry C.M."/>
            <person name="Lippert R."/>
            <person name="Walenz B."/>
            <person name="Shatkay H."/>
            <person name="Dew I."/>
            <person name="Miller J.R."/>
            <person name="Flanigan M.J."/>
            <person name="Edwards N.J."/>
            <person name="Bolanos R."/>
            <person name="Fasulo D."/>
            <person name="Halldorsson B.V."/>
            <person name="Hannenhalli S."/>
            <person name="Turner R."/>
            <person name="Yooseph S."/>
            <person name="Lu F."/>
            <person name="Nusskern D.R."/>
            <person name="Shue B.C."/>
            <person name="Zheng X.H."/>
            <person name="Zhong F."/>
            <person name="Delcher A.L."/>
            <person name="Huson D.H."/>
            <person name="Kravitz S.A."/>
            <person name="Mouchard L."/>
            <person name="Reinert K."/>
            <person name="Remington K.A."/>
            <person name="Clark A.G."/>
            <person name="Waterman M.S."/>
            <person name="Eichler E.E."/>
            <person name="Adams M.D."/>
            <person name="Hunkapiller M.W."/>
            <person name="Myers E.W."/>
            <person name="Venter J.C."/>
        </authorList>
    </citation>
    <scope>NUCLEOTIDE SEQUENCE [LARGE SCALE GENOMIC DNA]</scope>
</reference>
<reference key="7">
    <citation type="journal article" date="2004" name="Genome Res.">
        <title>The status, quality, and expansion of the NIH full-length cDNA project: the Mammalian Gene Collection (MGC).</title>
        <authorList>
            <consortium name="The MGC Project Team"/>
        </authorList>
    </citation>
    <scope>NUCLEOTIDE SEQUENCE [LARGE SCALE MRNA] (ISOFORM 1)</scope>
    <scope>NUCLEOTIDE SEQUENCE [LARGE SCALE MRNA] OF 249-344 (ISOFORMS 1/3/4)</scope>
    <source>
        <tissue>Brain</tissue>
    </source>
</reference>
<reference key="8">
    <citation type="journal article" date="2013" name="Endocrinology">
        <title>Characterization, neurosteroid binding and brain distribution of human membrane progesterone receptors delta and {epsilon} (mPRdelta and mPR{epsilon}) and mPRdelta involvement in neurosteroid inhibition of apoptosis.</title>
        <authorList>
            <person name="Pang Y."/>
            <person name="Dong J."/>
            <person name="Thomas P."/>
        </authorList>
    </citation>
    <scope>FUNCTION</scope>
    <scope>TISSUE SPECIFICITY</scope>
    <scope>SUBCELLULAR LOCATION</scope>
    <scope>SUBUNIT</scope>
</reference>
<reference key="9">
    <citation type="journal article" date="2013" name="J. Neuroendocrinol.">
        <title>Nonclassical progesterone signalling molecules in the nervous system.</title>
        <authorList>
            <person name="Petersen S.L."/>
            <person name="Intlekofer K.A."/>
            <person name="Moura-Conlon P.J."/>
            <person name="Brewer D.N."/>
            <person name="Del Pino Sans J."/>
            <person name="Lopez J.A."/>
        </authorList>
    </citation>
    <scope>FUNCTION</scope>
    <scope>REVIEW</scope>
    <scope>TISSUE SPECIFICITY</scope>
</reference>
<sequence length="344" mass="37989">MLSLKLPQLLQVHQVPRVFWEDGIMSGYRRPTSSALDCVLSSFQMTNETVNIWTHFLPTWYFLWRLLALAGGPGFRAEPYHWPLLVFLLPACLYPFASCCAHTFSSMSPRMRHICYFLDYGALSLYSLGCAFPYAAYSMPASWLHGHLHQFFVPAAALNSFLCTGLSCYSRFLELESPGLSKVLRTGAFAYPFLFDNLPLFYRLGLCWGRGHGCGQEALSTSHGYHLFCALLTGFLFASHLPERLAPGRFDYIGHSHQLFHICAVLGTHFQLEAVLADMGSRRAWLATQEPALGLAGTVATLVLAAAGNLLIIAAFTATLLRAPSTCPLLQGGPLEGGTQAKQQ</sequence>
<evidence type="ECO:0000255" key="1"/>
<evidence type="ECO:0000269" key="2">
    <source>
    </source>
</evidence>
<evidence type="ECO:0000269" key="3">
    <source>
    </source>
</evidence>
<evidence type="ECO:0000303" key="4">
    <source>
    </source>
</evidence>
<evidence type="ECO:0000303" key="5">
    <source>
    </source>
</evidence>
<evidence type="ECO:0000303" key="6">
    <source>
    </source>
</evidence>
<evidence type="ECO:0000303" key="7">
    <source ref="1"/>
</evidence>
<evidence type="ECO:0000305" key="8"/>
<evidence type="ECO:0000312" key="9">
    <source>
        <dbReference type="HGNC" id="HGNC:30132"/>
    </source>
</evidence>
<organism>
    <name type="scientific">Homo sapiens</name>
    <name type="common">Human</name>
    <dbReference type="NCBI Taxonomy" id="9606"/>
    <lineage>
        <taxon>Eukaryota</taxon>
        <taxon>Metazoa</taxon>
        <taxon>Chordata</taxon>
        <taxon>Craniata</taxon>
        <taxon>Vertebrata</taxon>
        <taxon>Euteleostomi</taxon>
        <taxon>Mammalia</taxon>
        <taxon>Eutheria</taxon>
        <taxon>Euarchontoglires</taxon>
        <taxon>Primates</taxon>
        <taxon>Haplorrhini</taxon>
        <taxon>Catarrhini</taxon>
        <taxon>Hominidae</taxon>
        <taxon>Homo</taxon>
    </lineage>
</organism>
<name>PAQR6_HUMAN</name>